<reference key="1">
    <citation type="journal article" date="2004" name="Nat. Biotechnol.">
        <title>The genome sequence of the anaerobic, sulfate-reducing bacterium Desulfovibrio vulgaris Hildenborough.</title>
        <authorList>
            <person name="Heidelberg J.F."/>
            <person name="Seshadri R."/>
            <person name="Haveman S.A."/>
            <person name="Hemme C.L."/>
            <person name="Paulsen I.T."/>
            <person name="Kolonay J.F."/>
            <person name="Eisen J.A."/>
            <person name="Ward N.L."/>
            <person name="Methe B.A."/>
            <person name="Brinkac L.M."/>
            <person name="Daugherty S.C."/>
            <person name="DeBoy R.T."/>
            <person name="Dodson R.J."/>
            <person name="Durkin A.S."/>
            <person name="Madupu R."/>
            <person name="Nelson W.C."/>
            <person name="Sullivan S.A."/>
            <person name="Fouts D.E."/>
            <person name="Haft D.H."/>
            <person name="Selengut J."/>
            <person name="Peterson J.D."/>
            <person name="Davidsen T.M."/>
            <person name="Zafar N."/>
            <person name="Zhou L."/>
            <person name="Radune D."/>
            <person name="Dimitrov G."/>
            <person name="Hance M."/>
            <person name="Tran K."/>
            <person name="Khouri H.M."/>
            <person name="Gill J."/>
            <person name="Utterback T.R."/>
            <person name="Feldblyum T.V."/>
            <person name="Wall J.D."/>
            <person name="Voordouw G."/>
            <person name="Fraser C.M."/>
        </authorList>
    </citation>
    <scope>NUCLEOTIDE SEQUENCE [LARGE SCALE GENOMIC DNA]</scope>
    <source>
        <strain>ATCC 29579 / DSM 644 / CCUG 34227 / NCIMB 8303 / VKM B-1760 / Hildenborough</strain>
    </source>
</reference>
<evidence type="ECO:0000255" key="1">
    <source>
        <dbReference type="HAMAP-Rule" id="MF_01713"/>
    </source>
</evidence>
<comment type="function">
    <text evidence="1">Part of the ABC transporter complex PhnCDE involved in phosphonates import. Responsible for energy coupling to the transport system.</text>
</comment>
<comment type="catalytic activity">
    <reaction evidence="1">
        <text>phosphonate(out) + ATP + H2O = phosphonate(in) + ADP + phosphate + H(+)</text>
        <dbReference type="Rhea" id="RHEA:18065"/>
        <dbReference type="ChEBI" id="CHEBI:15377"/>
        <dbReference type="ChEBI" id="CHEBI:15378"/>
        <dbReference type="ChEBI" id="CHEBI:16215"/>
        <dbReference type="ChEBI" id="CHEBI:30616"/>
        <dbReference type="ChEBI" id="CHEBI:43474"/>
        <dbReference type="ChEBI" id="CHEBI:456216"/>
        <dbReference type="EC" id="7.3.2.2"/>
    </reaction>
</comment>
<comment type="subunit">
    <text evidence="1">The complex is composed of two ATP-binding proteins (PhnC), two transmembrane proteins (PhnE) and a solute-binding protein (PhnD).</text>
</comment>
<comment type="subcellular location">
    <subcellularLocation>
        <location evidence="1">Cell inner membrane</location>
        <topology evidence="1">Peripheral membrane protein</topology>
    </subcellularLocation>
</comment>
<comment type="similarity">
    <text evidence="1">Belongs to the ABC transporter superfamily. Phosphonates importer (TC 3.A.1.9.1) family.</text>
</comment>
<dbReference type="EC" id="7.3.2.2" evidence="1"/>
<dbReference type="EMBL" id="AE017285">
    <property type="protein sequence ID" value="AAS96412.1"/>
    <property type="molecule type" value="Genomic_DNA"/>
</dbReference>
<dbReference type="RefSeq" id="WP_010939222.1">
    <property type="nucleotide sequence ID" value="NC_002937.3"/>
</dbReference>
<dbReference type="RefSeq" id="YP_011153.1">
    <property type="nucleotide sequence ID" value="NC_002937.3"/>
</dbReference>
<dbReference type="SMR" id="Q72AQ6"/>
<dbReference type="STRING" id="882.DVU_1936"/>
<dbReference type="PaxDb" id="882-DVU_1936"/>
<dbReference type="EnsemblBacteria" id="AAS96412">
    <property type="protein sequence ID" value="AAS96412"/>
    <property type="gene ID" value="DVU_1936"/>
</dbReference>
<dbReference type="KEGG" id="dvu:DVU_1936"/>
<dbReference type="PATRIC" id="fig|882.5.peg.1779"/>
<dbReference type="eggNOG" id="COG3638">
    <property type="taxonomic scope" value="Bacteria"/>
</dbReference>
<dbReference type="HOGENOM" id="CLU_000604_1_22_7"/>
<dbReference type="OrthoDB" id="9809450at2"/>
<dbReference type="PhylomeDB" id="Q72AQ6"/>
<dbReference type="Proteomes" id="UP000002194">
    <property type="component" value="Chromosome"/>
</dbReference>
<dbReference type="GO" id="GO:0005886">
    <property type="term" value="C:plasma membrane"/>
    <property type="evidence" value="ECO:0007669"/>
    <property type="project" value="UniProtKB-SubCell"/>
</dbReference>
<dbReference type="GO" id="GO:0015416">
    <property type="term" value="F:ABC-type phosphonate transporter activity"/>
    <property type="evidence" value="ECO:0007669"/>
    <property type="project" value="UniProtKB-EC"/>
</dbReference>
<dbReference type="GO" id="GO:0005524">
    <property type="term" value="F:ATP binding"/>
    <property type="evidence" value="ECO:0007669"/>
    <property type="project" value="UniProtKB-KW"/>
</dbReference>
<dbReference type="GO" id="GO:0016887">
    <property type="term" value="F:ATP hydrolysis activity"/>
    <property type="evidence" value="ECO:0007669"/>
    <property type="project" value="InterPro"/>
</dbReference>
<dbReference type="CDD" id="cd03256">
    <property type="entry name" value="ABC_PhnC_transporter"/>
    <property type="match status" value="1"/>
</dbReference>
<dbReference type="Gene3D" id="3.40.50.300">
    <property type="entry name" value="P-loop containing nucleotide triphosphate hydrolases"/>
    <property type="match status" value="1"/>
</dbReference>
<dbReference type="InterPro" id="IPR003593">
    <property type="entry name" value="AAA+_ATPase"/>
</dbReference>
<dbReference type="InterPro" id="IPR003439">
    <property type="entry name" value="ABC_transporter-like_ATP-bd"/>
</dbReference>
<dbReference type="InterPro" id="IPR017871">
    <property type="entry name" value="ABC_transporter-like_CS"/>
</dbReference>
<dbReference type="InterPro" id="IPR012693">
    <property type="entry name" value="ABC_transpr_PhnC"/>
</dbReference>
<dbReference type="InterPro" id="IPR050086">
    <property type="entry name" value="MetN_ABC_transporter-like"/>
</dbReference>
<dbReference type="InterPro" id="IPR027417">
    <property type="entry name" value="P-loop_NTPase"/>
</dbReference>
<dbReference type="NCBIfam" id="TIGR02315">
    <property type="entry name" value="ABC_phnC"/>
    <property type="match status" value="1"/>
</dbReference>
<dbReference type="PANTHER" id="PTHR43166">
    <property type="entry name" value="AMINO ACID IMPORT ATP-BINDING PROTEIN"/>
    <property type="match status" value="1"/>
</dbReference>
<dbReference type="PANTHER" id="PTHR43166:SF6">
    <property type="entry name" value="PHOSPHONATES IMPORT ATP-BINDING PROTEIN PHNC"/>
    <property type="match status" value="1"/>
</dbReference>
<dbReference type="Pfam" id="PF00005">
    <property type="entry name" value="ABC_tran"/>
    <property type="match status" value="1"/>
</dbReference>
<dbReference type="SMART" id="SM00382">
    <property type="entry name" value="AAA"/>
    <property type="match status" value="1"/>
</dbReference>
<dbReference type="SUPFAM" id="SSF52540">
    <property type="entry name" value="P-loop containing nucleoside triphosphate hydrolases"/>
    <property type="match status" value="1"/>
</dbReference>
<dbReference type="PROSITE" id="PS00211">
    <property type="entry name" value="ABC_TRANSPORTER_1"/>
    <property type="match status" value="1"/>
</dbReference>
<dbReference type="PROSITE" id="PS50893">
    <property type="entry name" value="ABC_TRANSPORTER_2"/>
    <property type="match status" value="1"/>
</dbReference>
<dbReference type="PROSITE" id="PS51249">
    <property type="entry name" value="PHNC"/>
    <property type="match status" value="1"/>
</dbReference>
<organism>
    <name type="scientific">Nitratidesulfovibrio vulgaris (strain ATCC 29579 / DSM 644 / CCUG 34227 / NCIMB 8303 / VKM B-1760 / Hildenborough)</name>
    <name type="common">Desulfovibrio vulgaris</name>
    <dbReference type="NCBI Taxonomy" id="882"/>
    <lineage>
        <taxon>Bacteria</taxon>
        <taxon>Pseudomonadati</taxon>
        <taxon>Thermodesulfobacteriota</taxon>
        <taxon>Desulfovibrionia</taxon>
        <taxon>Desulfovibrionales</taxon>
        <taxon>Desulfovibrionaceae</taxon>
        <taxon>Nitratidesulfovibrio</taxon>
    </lineage>
</organism>
<sequence>MSHASDPKKAGAHGDKSLVVEHLRKEYVRGKAVLKDISFTVSGQSTTAIIGPSGTGKSTLLRCINRLIEPTAGRILVSGEDVCALKGTALREARRRIGMVFQEYNLVERLSVMENVLCGRLGYISPWRAWLRKFPQEDIDRAFDLLDMVGLADFARARADELSGGQRQRVGIARAVMQEPHILLADEPTSSLDPKTSVEIMELLRAVAEKRDIPVLVNIHDVTLGRRFSDRVIGMCKGEVLFDDVPSALQDDHLKQIYGGEEWLQ</sequence>
<name>PHNC_NITV2</name>
<protein>
    <recommendedName>
        <fullName evidence="1">Phosphonates import ATP-binding protein PhnC</fullName>
        <ecNumber evidence="1">7.3.2.2</ecNumber>
    </recommendedName>
</protein>
<feature type="chain" id="PRO_0000092705" description="Phosphonates import ATP-binding protein PhnC">
    <location>
        <begin position="1"/>
        <end position="265"/>
    </location>
</feature>
<feature type="domain" description="ABC transporter" evidence="1">
    <location>
        <begin position="18"/>
        <end position="262"/>
    </location>
</feature>
<feature type="binding site" evidence="1">
    <location>
        <begin position="51"/>
        <end position="58"/>
    </location>
    <ligand>
        <name>ATP</name>
        <dbReference type="ChEBI" id="CHEBI:30616"/>
    </ligand>
</feature>
<proteinExistence type="inferred from homology"/>
<gene>
    <name evidence="1" type="primary">phnC</name>
    <name type="ordered locus">DVU_1936</name>
</gene>
<accession>Q72AQ6</accession>
<keyword id="KW-0067">ATP-binding</keyword>
<keyword id="KW-0997">Cell inner membrane</keyword>
<keyword id="KW-1003">Cell membrane</keyword>
<keyword id="KW-0472">Membrane</keyword>
<keyword id="KW-0547">Nucleotide-binding</keyword>
<keyword id="KW-0918">Phosphonate transport</keyword>
<keyword id="KW-1185">Reference proteome</keyword>
<keyword id="KW-1278">Translocase</keyword>
<keyword id="KW-0813">Transport</keyword>